<proteinExistence type="inferred from homology"/>
<organism>
    <name type="scientific">Escherichia coli (strain 55989 / EAEC)</name>
    <dbReference type="NCBI Taxonomy" id="585055"/>
    <lineage>
        <taxon>Bacteria</taxon>
        <taxon>Pseudomonadati</taxon>
        <taxon>Pseudomonadota</taxon>
        <taxon>Gammaproteobacteria</taxon>
        <taxon>Enterobacterales</taxon>
        <taxon>Enterobacteriaceae</taxon>
        <taxon>Escherichia</taxon>
    </lineage>
</organism>
<feature type="chain" id="PRO_1000197044" description="tRNA modification GTPase MnmE">
    <location>
        <begin position="1"/>
        <end position="454"/>
    </location>
</feature>
<feature type="domain" description="TrmE-type G">
    <location>
        <begin position="216"/>
        <end position="377"/>
    </location>
</feature>
<feature type="binding site" evidence="1">
    <location>
        <position position="23"/>
    </location>
    <ligand>
        <name>(6S)-5-formyl-5,6,7,8-tetrahydrofolate</name>
        <dbReference type="ChEBI" id="CHEBI:57457"/>
    </ligand>
</feature>
<feature type="binding site" evidence="1">
    <location>
        <position position="80"/>
    </location>
    <ligand>
        <name>(6S)-5-formyl-5,6,7,8-tetrahydrofolate</name>
        <dbReference type="ChEBI" id="CHEBI:57457"/>
    </ligand>
</feature>
<feature type="binding site" evidence="1">
    <location>
        <position position="120"/>
    </location>
    <ligand>
        <name>(6S)-5-formyl-5,6,7,8-tetrahydrofolate</name>
        <dbReference type="ChEBI" id="CHEBI:57457"/>
    </ligand>
</feature>
<feature type="binding site" evidence="1">
    <location>
        <begin position="226"/>
        <end position="231"/>
    </location>
    <ligand>
        <name>GTP</name>
        <dbReference type="ChEBI" id="CHEBI:37565"/>
    </ligand>
</feature>
<feature type="binding site" evidence="1">
    <location>
        <position position="226"/>
    </location>
    <ligand>
        <name>K(+)</name>
        <dbReference type="ChEBI" id="CHEBI:29103"/>
    </ligand>
</feature>
<feature type="binding site" evidence="1">
    <location>
        <position position="230"/>
    </location>
    <ligand>
        <name>Mg(2+)</name>
        <dbReference type="ChEBI" id="CHEBI:18420"/>
    </ligand>
</feature>
<feature type="binding site" evidence="1">
    <location>
        <begin position="245"/>
        <end position="251"/>
    </location>
    <ligand>
        <name>GTP</name>
        <dbReference type="ChEBI" id="CHEBI:37565"/>
    </ligand>
</feature>
<feature type="binding site" evidence="1">
    <location>
        <position position="245"/>
    </location>
    <ligand>
        <name>K(+)</name>
        <dbReference type="ChEBI" id="CHEBI:29103"/>
    </ligand>
</feature>
<feature type="binding site" evidence="1">
    <location>
        <position position="247"/>
    </location>
    <ligand>
        <name>K(+)</name>
        <dbReference type="ChEBI" id="CHEBI:29103"/>
    </ligand>
</feature>
<feature type="binding site" evidence="1">
    <location>
        <position position="250"/>
    </location>
    <ligand>
        <name>K(+)</name>
        <dbReference type="ChEBI" id="CHEBI:29103"/>
    </ligand>
</feature>
<feature type="binding site" evidence="1">
    <location>
        <position position="251"/>
    </location>
    <ligand>
        <name>Mg(2+)</name>
        <dbReference type="ChEBI" id="CHEBI:18420"/>
    </ligand>
</feature>
<feature type="binding site" evidence="1">
    <location>
        <begin position="270"/>
        <end position="273"/>
    </location>
    <ligand>
        <name>GTP</name>
        <dbReference type="ChEBI" id="CHEBI:37565"/>
    </ligand>
</feature>
<feature type="binding site" evidence="1">
    <location>
        <begin position="335"/>
        <end position="338"/>
    </location>
    <ligand>
        <name>GTP</name>
        <dbReference type="ChEBI" id="CHEBI:37565"/>
    </ligand>
</feature>
<feature type="binding site" evidence="1">
    <location>
        <begin position="358"/>
        <end position="360"/>
    </location>
    <ligand>
        <name>GTP</name>
        <dbReference type="ChEBI" id="CHEBI:37565"/>
    </ligand>
</feature>
<feature type="binding site" evidence="1">
    <location>
        <position position="454"/>
    </location>
    <ligand>
        <name>(6S)-5-formyl-5,6,7,8-tetrahydrofolate</name>
        <dbReference type="ChEBI" id="CHEBI:57457"/>
    </ligand>
</feature>
<evidence type="ECO:0000255" key="1">
    <source>
        <dbReference type="HAMAP-Rule" id="MF_00379"/>
    </source>
</evidence>
<reference key="1">
    <citation type="journal article" date="2009" name="PLoS Genet.">
        <title>Organised genome dynamics in the Escherichia coli species results in highly diverse adaptive paths.</title>
        <authorList>
            <person name="Touchon M."/>
            <person name="Hoede C."/>
            <person name="Tenaillon O."/>
            <person name="Barbe V."/>
            <person name="Baeriswyl S."/>
            <person name="Bidet P."/>
            <person name="Bingen E."/>
            <person name="Bonacorsi S."/>
            <person name="Bouchier C."/>
            <person name="Bouvet O."/>
            <person name="Calteau A."/>
            <person name="Chiapello H."/>
            <person name="Clermont O."/>
            <person name="Cruveiller S."/>
            <person name="Danchin A."/>
            <person name="Diard M."/>
            <person name="Dossat C."/>
            <person name="Karoui M.E."/>
            <person name="Frapy E."/>
            <person name="Garry L."/>
            <person name="Ghigo J.M."/>
            <person name="Gilles A.M."/>
            <person name="Johnson J."/>
            <person name="Le Bouguenec C."/>
            <person name="Lescat M."/>
            <person name="Mangenot S."/>
            <person name="Martinez-Jehanne V."/>
            <person name="Matic I."/>
            <person name="Nassif X."/>
            <person name="Oztas S."/>
            <person name="Petit M.A."/>
            <person name="Pichon C."/>
            <person name="Rouy Z."/>
            <person name="Ruf C.S."/>
            <person name="Schneider D."/>
            <person name="Tourret J."/>
            <person name="Vacherie B."/>
            <person name="Vallenet D."/>
            <person name="Medigue C."/>
            <person name="Rocha E.P.C."/>
            <person name="Denamur E."/>
        </authorList>
    </citation>
    <scope>NUCLEOTIDE SEQUENCE [LARGE SCALE GENOMIC DNA]</scope>
    <source>
        <strain>55989 / EAEC</strain>
    </source>
</reference>
<name>MNME_ECO55</name>
<dbReference type="EC" id="3.6.-.-" evidence="1"/>
<dbReference type="EMBL" id="CU928145">
    <property type="protein sequence ID" value="CAV00765.1"/>
    <property type="molecule type" value="Genomic_DNA"/>
</dbReference>
<dbReference type="RefSeq" id="WP_001282347.1">
    <property type="nucleotide sequence ID" value="NC_011748.1"/>
</dbReference>
<dbReference type="SMR" id="B7L851"/>
<dbReference type="KEGG" id="eck:EC55989_4177"/>
<dbReference type="HOGENOM" id="CLU_019624_4_1_6"/>
<dbReference type="Proteomes" id="UP000000746">
    <property type="component" value="Chromosome"/>
</dbReference>
<dbReference type="GO" id="GO:0005829">
    <property type="term" value="C:cytosol"/>
    <property type="evidence" value="ECO:0007669"/>
    <property type="project" value="TreeGrafter"/>
</dbReference>
<dbReference type="GO" id="GO:0005525">
    <property type="term" value="F:GTP binding"/>
    <property type="evidence" value="ECO:0007669"/>
    <property type="project" value="UniProtKB-UniRule"/>
</dbReference>
<dbReference type="GO" id="GO:0003924">
    <property type="term" value="F:GTPase activity"/>
    <property type="evidence" value="ECO:0007669"/>
    <property type="project" value="UniProtKB-UniRule"/>
</dbReference>
<dbReference type="GO" id="GO:0046872">
    <property type="term" value="F:metal ion binding"/>
    <property type="evidence" value="ECO:0007669"/>
    <property type="project" value="UniProtKB-KW"/>
</dbReference>
<dbReference type="GO" id="GO:0030488">
    <property type="term" value="P:tRNA methylation"/>
    <property type="evidence" value="ECO:0007669"/>
    <property type="project" value="TreeGrafter"/>
</dbReference>
<dbReference type="GO" id="GO:0002098">
    <property type="term" value="P:tRNA wobble uridine modification"/>
    <property type="evidence" value="ECO:0007669"/>
    <property type="project" value="TreeGrafter"/>
</dbReference>
<dbReference type="CDD" id="cd04164">
    <property type="entry name" value="trmE"/>
    <property type="match status" value="1"/>
</dbReference>
<dbReference type="CDD" id="cd14858">
    <property type="entry name" value="TrmE_N"/>
    <property type="match status" value="1"/>
</dbReference>
<dbReference type="FunFam" id="3.30.1360.120:FF:000001">
    <property type="entry name" value="tRNA modification GTPase MnmE"/>
    <property type="match status" value="1"/>
</dbReference>
<dbReference type="FunFam" id="3.40.50.300:FF:000249">
    <property type="entry name" value="tRNA modification GTPase MnmE"/>
    <property type="match status" value="1"/>
</dbReference>
<dbReference type="Gene3D" id="3.40.50.300">
    <property type="entry name" value="P-loop containing nucleotide triphosphate hydrolases"/>
    <property type="match status" value="1"/>
</dbReference>
<dbReference type="Gene3D" id="3.30.1360.120">
    <property type="entry name" value="Probable tRNA modification gtpase trme, domain 1"/>
    <property type="match status" value="1"/>
</dbReference>
<dbReference type="Gene3D" id="1.20.120.430">
    <property type="entry name" value="tRNA modification GTPase MnmE domain 2"/>
    <property type="match status" value="1"/>
</dbReference>
<dbReference type="HAMAP" id="MF_00379">
    <property type="entry name" value="GTPase_MnmE"/>
    <property type="match status" value="1"/>
</dbReference>
<dbReference type="InterPro" id="IPR031168">
    <property type="entry name" value="G_TrmE"/>
</dbReference>
<dbReference type="InterPro" id="IPR006073">
    <property type="entry name" value="GTP-bd"/>
</dbReference>
<dbReference type="InterPro" id="IPR018948">
    <property type="entry name" value="GTP-bd_TrmE_N"/>
</dbReference>
<dbReference type="InterPro" id="IPR004520">
    <property type="entry name" value="GTPase_MnmE"/>
</dbReference>
<dbReference type="InterPro" id="IPR027368">
    <property type="entry name" value="MnmE_dom2"/>
</dbReference>
<dbReference type="InterPro" id="IPR025867">
    <property type="entry name" value="MnmE_helical"/>
</dbReference>
<dbReference type="InterPro" id="IPR027417">
    <property type="entry name" value="P-loop_NTPase"/>
</dbReference>
<dbReference type="InterPro" id="IPR005225">
    <property type="entry name" value="Small_GTP-bd"/>
</dbReference>
<dbReference type="InterPro" id="IPR027266">
    <property type="entry name" value="TrmE/GcvT_dom1"/>
</dbReference>
<dbReference type="NCBIfam" id="TIGR00450">
    <property type="entry name" value="mnmE_trmE_thdF"/>
    <property type="match status" value="1"/>
</dbReference>
<dbReference type="NCBIfam" id="NF003661">
    <property type="entry name" value="PRK05291.1-3"/>
    <property type="match status" value="1"/>
</dbReference>
<dbReference type="NCBIfam" id="TIGR00231">
    <property type="entry name" value="small_GTP"/>
    <property type="match status" value="1"/>
</dbReference>
<dbReference type="PANTHER" id="PTHR42714">
    <property type="entry name" value="TRNA MODIFICATION GTPASE GTPBP3"/>
    <property type="match status" value="1"/>
</dbReference>
<dbReference type="PANTHER" id="PTHR42714:SF2">
    <property type="entry name" value="TRNA MODIFICATION GTPASE GTPBP3, MITOCHONDRIAL"/>
    <property type="match status" value="1"/>
</dbReference>
<dbReference type="Pfam" id="PF01926">
    <property type="entry name" value="MMR_HSR1"/>
    <property type="match status" value="1"/>
</dbReference>
<dbReference type="Pfam" id="PF12631">
    <property type="entry name" value="MnmE_helical"/>
    <property type="match status" value="1"/>
</dbReference>
<dbReference type="Pfam" id="PF10396">
    <property type="entry name" value="TrmE_N"/>
    <property type="match status" value="1"/>
</dbReference>
<dbReference type="SUPFAM" id="SSF52540">
    <property type="entry name" value="P-loop containing nucleoside triphosphate hydrolases"/>
    <property type="match status" value="1"/>
</dbReference>
<dbReference type="SUPFAM" id="SSF116878">
    <property type="entry name" value="TrmE connector domain"/>
    <property type="match status" value="1"/>
</dbReference>
<dbReference type="PROSITE" id="PS51709">
    <property type="entry name" value="G_TRME"/>
    <property type="match status" value="1"/>
</dbReference>
<gene>
    <name evidence="1" type="primary">mnmE</name>
    <name evidence="1" type="synonym">trmE</name>
    <name type="ordered locus">EC55989_4177</name>
</gene>
<sequence length="454" mass="49245">MSDNDTIVAQATPPGRGGVGILRISGFKAREVAETVLGKLPKPRYADYLPFKDADGSVLDQGIALWFPGPNSFTGEDVLELQGHGGPVILDLLLKRILTIPGLRIARPGEFSERAFLNDKLDLAQAEAIADLIDASSEQAARSALNSLQGAFSARVNHLVEALTHLRIYVEAAIDFPDEEIDFLSDGKIEAQLNDVIADLDAVRAEARQGSLLREGMKVVIAGRPNAGKSSLLNALAGREAAIVTDIAGTTRDVLREHIHIDGMPLHIIDTAGLREASDEVERIGIERAWQEIEQADRVLFMVDGTTTDAVDPAEIWPEFIARLPAKLPITVVRNKADITGETLGMSEVNGHALIRLSARTGEGVEVLRNHLKQSMGFDTNMEGGFLARRRHLQALEQAAEHLQQGKAQLLGAWAGELLAEELRLAQQNLSEITGEFTSDDLLGRIFSSFCIGK</sequence>
<accession>B7L851</accession>
<protein>
    <recommendedName>
        <fullName evidence="1">tRNA modification GTPase MnmE</fullName>
        <ecNumber evidence="1">3.6.-.-</ecNumber>
    </recommendedName>
</protein>
<keyword id="KW-0963">Cytoplasm</keyword>
<keyword id="KW-0342">GTP-binding</keyword>
<keyword id="KW-0378">Hydrolase</keyword>
<keyword id="KW-0460">Magnesium</keyword>
<keyword id="KW-0479">Metal-binding</keyword>
<keyword id="KW-0547">Nucleotide-binding</keyword>
<keyword id="KW-0630">Potassium</keyword>
<keyword id="KW-1185">Reference proteome</keyword>
<keyword id="KW-0819">tRNA processing</keyword>
<comment type="function">
    <text evidence="1">Exhibits a very high intrinsic GTPase hydrolysis rate. Involved in the addition of a carboxymethylaminomethyl (cmnm) group at the wobble position (U34) of certain tRNAs, forming tRNA-cmnm(5)s(2)U34.</text>
</comment>
<comment type="cofactor">
    <cofactor evidence="1">
        <name>K(+)</name>
        <dbReference type="ChEBI" id="CHEBI:29103"/>
    </cofactor>
    <text evidence="1">Binds 1 potassium ion per subunit.</text>
</comment>
<comment type="subunit">
    <text evidence="1">Homodimer. Heterotetramer of two MnmE and two MnmG subunits.</text>
</comment>
<comment type="subcellular location">
    <subcellularLocation>
        <location evidence="1">Cytoplasm</location>
    </subcellularLocation>
</comment>
<comment type="similarity">
    <text evidence="1">Belongs to the TRAFAC class TrmE-Era-EngA-EngB-Septin-like GTPase superfamily. TrmE GTPase family.</text>
</comment>